<reference key="1">
    <citation type="journal article" date="2000" name="Nature">
        <title>DNA sequence of both chromosomes of the cholera pathogen Vibrio cholerae.</title>
        <authorList>
            <person name="Heidelberg J.F."/>
            <person name="Eisen J.A."/>
            <person name="Nelson W.C."/>
            <person name="Clayton R.A."/>
            <person name="Gwinn M.L."/>
            <person name="Dodson R.J."/>
            <person name="Haft D.H."/>
            <person name="Hickey E.K."/>
            <person name="Peterson J.D."/>
            <person name="Umayam L.A."/>
            <person name="Gill S.R."/>
            <person name="Nelson K.E."/>
            <person name="Read T.D."/>
            <person name="Tettelin H."/>
            <person name="Richardson D.L."/>
            <person name="Ermolaeva M.D."/>
            <person name="Vamathevan J.J."/>
            <person name="Bass S."/>
            <person name="Qin H."/>
            <person name="Dragoi I."/>
            <person name="Sellers P."/>
            <person name="McDonald L.A."/>
            <person name="Utterback T.R."/>
            <person name="Fleischmann R.D."/>
            <person name="Nierman W.C."/>
            <person name="White O."/>
            <person name="Salzberg S.L."/>
            <person name="Smith H.O."/>
            <person name="Colwell R.R."/>
            <person name="Mekalanos J.J."/>
            <person name="Venter J.C."/>
            <person name="Fraser C.M."/>
        </authorList>
    </citation>
    <scope>NUCLEOTIDE SEQUENCE [LARGE SCALE GENOMIC DNA]</scope>
    <source>
        <strain>ATCC 39315 / El Tor Inaba N16961</strain>
    </source>
</reference>
<organism>
    <name type="scientific">Vibrio cholerae serotype O1 (strain ATCC 39315 / El Tor Inaba N16961)</name>
    <dbReference type="NCBI Taxonomy" id="243277"/>
    <lineage>
        <taxon>Bacteria</taxon>
        <taxon>Pseudomonadati</taxon>
        <taxon>Pseudomonadota</taxon>
        <taxon>Gammaproteobacteria</taxon>
        <taxon>Vibrionales</taxon>
        <taxon>Vibrionaceae</taxon>
        <taxon>Vibrio</taxon>
    </lineage>
</organism>
<sequence length="352" mass="39458">MQVSDFHFELPDELIARYPKAERTASRLLQLDGNSGQLVDGTFKDVLELVEPGDLLVFNNTRVIPARMFGRKASGGKLEVLVERMLDEHTILAHVRSSKPPKPGTELYLGENDEFHAVMQARHDALFEIRFTAETVVLDILNQIGHMPLPPYIDRPDEEADKERYQTVYNQKPGAVAAPTAGLHFDQALLEQIQAKGVELAYVTLHVGAGTFQPVRVENIHDHHMHAEYVEVPQEVVDAITATKARGGRVVAVGTTSVRSLESAAQDALQKGTELKPFFGDTEIFIFPGYQYQLVDCLITNFHLPESTLIMLVSAFAGYEHTMAAYEHAVKEQYRFFSYGDAMFIRKQMTKA</sequence>
<protein>
    <recommendedName>
        <fullName evidence="1">S-adenosylmethionine:tRNA ribosyltransferase-isomerase</fullName>
        <ecNumber evidence="1">2.4.99.17</ecNumber>
    </recommendedName>
    <alternativeName>
        <fullName evidence="1">Queuosine biosynthesis protein QueA</fullName>
    </alternativeName>
</protein>
<name>QUEA_VIBCH</name>
<gene>
    <name evidence="1" type="primary">queA</name>
    <name type="ordered locus">VC_0739</name>
</gene>
<accession>Q9KTZ1</accession>
<feature type="chain" id="PRO_0000165460" description="S-adenosylmethionine:tRNA ribosyltransferase-isomerase">
    <location>
        <begin position="1"/>
        <end position="352"/>
    </location>
</feature>
<keyword id="KW-0963">Cytoplasm</keyword>
<keyword id="KW-0671">Queuosine biosynthesis</keyword>
<keyword id="KW-1185">Reference proteome</keyword>
<keyword id="KW-0949">S-adenosyl-L-methionine</keyword>
<keyword id="KW-0808">Transferase</keyword>
<comment type="function">
    <text evidence="1">Transfers and isomerizes the ribose moiety from AdoMet to the 7-aminomethyl group of 7-deazaguanine (preQ1-tRNA) to give epoxyqueuosine (oQ-tRNA).</text>
</comment>
<comment type="catalytic activity">
    <reaction evidence="1">
        <text>7-aminomethyl-7-carbaguanosine(34) in tRNA + S-adenosyl-L-methionine = epoxyqueuosine(34) in tRNA + adenine + L-methionine + 2 H(+)</text>
        <dbReference type="Rhea" id="RHEA:32155"/>
        <dbReference type="Rhea" id="RHEA-COMP:10342"/>
        <dbReference type="Rhea" id="RHEA-COMP:18582"/>
        <dbReference type="ChEBI" id="CHEBI:15378"/>
        <dbReference type="ChEBI" id="CHEBI:16708"/>
        <dbReference type="ChEBI" id="CHEBI:57844"/>
        <dbReference type="ChEBI" id="CHEBI:59789"/>
        <dbReference type="ChEBI" id="CHEBI:82833"/>
        <dbReference type="ChEBI" id="CHEBI:194443"/>
        <dbReference type="EC" id="2.4.99.17"/>
    </reaction>
</comment>
<comment type="pathway">
    <text evidence="1">tRNA modification; tRNA-queuosine biosynthesis.</text>
</comment>
<comment type="subunit">
    <text evidence="1">Monomer.</text>
</comment>
<comment type="subcellular location">
    <subcellularLocation>
        <location evidence="1">Cytoplasm</location>
    </subcellularLocation>
</comment>
<comment type="similarity">
    <text evidence="1">Belongs to the QueA family.</text>
</comment>
<proteinExistence type="inferred from homology"/>
<dbReference type="EC" id="2.4.99.17" evidence="1"/>
<dbReference type="EMBL" id="AE003852">
    <property type="protein sequence ID" value="AAF93904.1"/>
    <property type="molecule type" value="Genomic_DNA"/>
</dbReference>
<dbReference type="PIR" id="F82284">
    <property type="entry name" value="F82284"/>
</dbReference>
<dbReference type="RefSeq" id="NP_230388.1">
    <property type="nucleotide sequence ID" value="NC_002505.1"/>
</dbReference>
<dbReference type="RefSeq" id="WP_001198115.1">
    <property type="nucleotide sequence ID" value="NZ_LT906614.1"/>
</dbReference>
<dbReference type="SMR" id="Q9KTZ1"/>
<dbReference type="STRING" id="243277.VC_0739"/>
<dbReference type="DNASU" id="2615748"/>
<dbReference type="EnsemblBacteria" id="AAF93904">
    <property type="protein sequence ID" value="AAF93904"/>
    <property type="gene ID" value="VC_0739"/>
</dbReference>
<dbReference type="KEGG" id="vch:VC_0739"/>
<dbReference type="PATRIC" id="fig|243277.26.peg.704"/>
<dbReference type="eggNOG" id="COG0809">
    <property type="taxonomic scope" value="Bacteria"/>
</dbReference>
<dbReference type="HOGENOM" id="CLU_039110_1_0_6"/>
<dbReference type="UniPathway" id="UPA00392"/>
<dbReference type="Proteomes" id="UP000000584">
    <property type="component" value="Chromosome 1"/>
</dbReference>
<dbReference type="GO" id="GO:0005737">
    <property type="term" value="C:cytoplasm"/>
    <property type="evidence" value="ECO:0007669"/>
    <property type="project" value="UniProtKB-SubCell"/>
</dbReference>
<dbReference type="GO" id="GO:0051075">
    <property type="term" value="F:S-adenosylmethionine:tRNA ribosyltransferase-isomerase activity"/>
    <property type="evidence" value="ECO:0000318"/>
    <property type="project" value="GO_Central"/>
</dbReference>
<dbReference type="GO" id="GO:0008616">
    <property type="term" value="P:queuosine biosynthetic process"/>
    <property type="evidence" value="ECO:0000318"/>
    <property type="project" value="GO_Central"/>
</dbReference>
<dbReference type="GO" id="GO:0002099">
    <property type="term" value="P:tRNA wobble guanine modification"/>
    <property type="evidence" value="ECO:0000318"/>
    <property type="project" value="GO_Central"/>
</dbReference>
<dbReference type="FunFam" id="2.40.10.240:FF:000001">
    <property type="entry name" value="S-adenosylmethionine:tRNA ribosyltransferase-isomerase"/>
    <property type="match status" value="1"/>
</dbReference>
<dbReference type="FunFam" id="3.40.1780.10:FF:000001">
    <property type="entry name" value="S-adenosylmethionine:tRNA ribosyltransferase-isomerase"/>
    <property type="match status" value="1"/>
</dbReference>
<dbReference type="Gene3D" id="2.40.10.240">
    <property type="entry name" value="QueA-like"/>
    <property type="match status" value="1"/>
</dbReference>
<dbReference type="Gene3D" id="3.40.1780.10">
    <property type="entry name" value="QueA-like"/>
    <property type="match status" value="1"/>
</dbReference>
<dbReference type="HAMAP" id="MF_00113">
    <property type="entry name" value="QueA"/>
    <property type="match status" value="1"/>
</dbReference>
<dbReference type="InterPro" id="IPR003699">
    <property type="entry name" value="QueA"/>
</dbReference>
<dbReference type="InterPro" id="IPR042118">
    <property type="entry name" value="QueA_dom1"/>
</dbReference>
<dbReference type="InterPro" id="IPR042119">
    <property type="entry name" value="QueA_dom2"/>
</dbReference>
<dbReference type="InterPro" id="IPR036100">
    <property type="entry name" value="QueA_sf"/>
</dbReference>
<dbReference type="NCBIfam" id="NF001140">
    <property type="entry name" value="PRK00147.1"/>
    <property type="match status" value="1"/>
</dbReference>
<dbReference type="NCBIfam" id="TIGR00113">
    <property type="entry name" value="queA"/>
    <property type="match status" value="1"/>
</dbReference>
<dbReference type="PANTHER" id="PTHR30307">
    <property type="entry name" value="S-ADENOSYLMETHIONINE:TRNA RIBOSYLTRANSFERASE-ISOMERASE"/>
    <property type="match status" value="1"/>
</dbReference>
<dbReference type="PANTHER" id="PTHR30307:SF0">
    <property type="entry name" value="S-ADENOSYLMETHIONINE:TRNA RIBOSYLTRANSFERASE-ISOMERASE"/>
    <property type="match status" value="1"/>
</dbReference>
<dbReference type="Pfam" id="PF02547">
    <property type="entry name" value="Queuosine_synth"/>
    <property type="match status" value="1"/>
</dbReference>
<dbReference type="SUPFAM" id="SSF111337">
    <property type="entry name" value="QueA-like"/>
    <property type="match status" value="1"/>
</dbReference>
<evidence type="ECO:0000255" key="1">
    <source>
        <dbReference type="HAMAP-Rule" id="MF_00113"/>
    </source>
</evidence>